<feature type="chain" id="PRO_0000377370" description="tRNA dimethylallyltransferase">
    <location>
        <begin position="1"/>
        <end position="297"/>
    </location>
</feature>
<feature type="region of interest" description="Interaction with substrate tRNA" evidence="1">
    <location>
        <begin position="36"/>
        <end position="39"/>
    </location>
</feature>
<feature type="binding site" evidence="1">
    <location>
        <begin position="10"/>
        <end position="17"/>
    </location>
    <ligand>
        <name>ATP</name>
        <dbReference type="ChEBI" id="CHEBI:30616"/>
    </ligand>
</feature>
<feature type="binding site" evidence="1">
    <location>
        <begin position="12"/>
        <end position="17"/>
    </location>
    <ligand>
        <name>substrate</name>
    </ligand>
</feature>
<feature type="site" description="Interaction with substrate tRNA" evidence="1">
    <location>
        <position position="99"/>
    </location>
</feature>
<feature type="site" description="Interaction with substrate tRNA" evidence="1">
    <location>
        <position position="121"/>
    </location>
</feature>
<accession>Q5GS00</accession>
<dbReference type="EC" id="2.5.1.75" evidence="1"/>
<dbReference type="EMBL" id="AE017321">
    <property type="protein sequence ID" value="AAW71224.1"/>
    <property type="molecule type" value="Genomic_DNA"/>
</dbReference>
<dbReference type="RefSeq" id="WP_011256834.1">
    <property type="nucleotide sequence ID" value="NC_006833.1"/>
</dbReference>
<dbReference type="SMR" id="Q5GS00"/>
<dbReference type="STRING" id="292805.Wbm0636"/>
<dbReference type="KEGG" id="wbm:Wbm0636"/>
<dbReference type="eggNOG" id="COG0324">
    <property type="taxonomic scope" value="Bacteria"/>
</dbReference>
<dbReference type="HOGENOM" id="CLU_032616_0_1_5"/>
<dbReference type="Proteomes" id="UP000000534">
    <property type="component" value="Chromosome"/>
</dbReference>
<dbReference type="GO" id="GO:0005524">
    <property type="term" value="F:ATP binding"/>
    <property type="evidence" value="ECO:0007669"/>
    <property type="project" value="UniProtKB-UniRule"/>
</dbReference>
<dbReference type="GO" id="GO:0052381">
    <property type="term" value="F:tRNA dimethylallyltransferase activity"/>
    <property type="evidence" value="ECO:0007669"/>
    <property type="project" value="UniProtKB-UniRule"/>
</dbReference>
<dbReference type="GO" id="GO:0006400">
    <property type="term" value="P:tRNA modification"/>
    <property type="evidence" value="ECO:0007669"/>
    <property type="project" value="TreeGrafter"/>
</dbReference>
<dbReference type="Gene3D" id="1.10.20.140">
    <property type="match status" value="1"/>
</dbReference>
<dbReference type="Gene3D" id="3.40.50.300">
    <property type="entry name" value="P-loop containing nucleotide triphosphate hydrolases"/>
    <property type="match status" value="1"/>
</dbReference>
<dbReference type="HAMAP" id="MF_00185">
    <property type="entry name" value="IPP_trans"/>
    <property type="match status" value="1"/>
</dbReference>
<dbReference type="InterPro" id="IPR039657">
    <property type="entry name" value="Dimethylallyltransferase"/>
</dbReference>
<dbReference type="InterPro" id="IPR018022">
    <property type="entry name" value="IPT"/>
</dbReference>
<dbReference type="InterPro" id="IPR027417">
    <property type="entry name" value="P-loop_NTPase"/>
</dbReference>
<dbReference type="NCBIfam" id="TIGR00174">
    <property type="entry name" value="miaA"/>
    <property type="match status" value="1"/>
</dbReference>
<dbReference type="PANTHER" id="PTHR11088">
    <property type="entry name" value="TRNA DIMETHYLALLYLTRANSFERASE"/>
    <property type="match status" value="1"/>
</dbReference>
<dbReference type="PANTHER" id="PTHR11088:SF60">
    <property type="entry name" value="TRNA DIMETHYLALLYLTRANSFERASE"/>
    <property type="match status" value="1"/>
</dbReference>
<dbReference type="Pfam" id="PF01715">
    <property type="entry name" value="IPPT"/>
    <property type="match status" value="1"/>
</dbReference>
<dbReference type="SUPFAM" id="SSF52540">
    <property type="entry name" value="P-loop containing nucleoside triphosphate hydrolases"/>
    <property type="match status" value="1"/>
</dbReference>
<gene>
    <name evidence="1" type="primary">miaA</name>
    <name type="ordered locus">Wbm0636</name>
</gene>
<keyword id="KW-0067">ATP-binding</keyword>
<keyword id="KW-0460">Magnesium</keyword>
<keyword id="KW-0547">Nucleotide-binding</keyword>
<keyword id="KW-1185">Reference proteome</keyword>
<keyword id="KW-0808">Transferase</keyword>
<keyword id="KW-0819">tRNA processing</keyword>
<reference key="1">
    <citation type="journal article" date="2005" name="PLoS Biol.">
        <title>The Wolbachia genome of Brugia malayi: endosymbiont evolution within a human pathogenic nematode.</title>
        <authorList>
            <person name="Foster J."/>
            <person name="Ganatra M."/>
            <person name="Kamal I."/>
            <person name="Ware J."/>
            <person name="Makarova K."/>
            <person name="Ivanova N."/>
            <person name="Bhattacharyya A."/>
            <person name="Kapatral V."/>
            <person name="Kumar S."/>
            <person name="Posfai J."/>
            <person name="Vincze T."/>
            <person name="Ingram J."/>
            <person name="Moran L."/>
            <person name="Lapidus A."/>
            <person name="Omelchenko M."/>
            <person name="Kyrpides N."/>
            <person name="Ghedin E."/>
            <person name="Wang S."/>
            <person name="Goltsman E."/>
            <person name="Joukov V."/>
            <person name="Ostrovskaya O."/>
            <person name="Tsukerman K."/>
            <person name="Mazur M."/>
            <person name="Comb D."/>
            <person name="Koonin E."/>
            <person name="Slatko B."/>
        </authorList>
    </citation>
    <scope>NUCLEOTIDE SEQUENCE [LARGE SCALE GENOMIC DNA]</scope>
    <source>
        <strain>TRS</strain>
    </source>
</reference>
<proteinExistence type="inferred from homology"/>
<sequence>MRDNIIIITGITASGKSELCDNLIKKYGNISIVNCDSKQVYKEIPIITAQPPKQEEFYRLYGCVPAKENYSVGLWLEDLKGEVDHALENARMPIITGGSGLYISSLINSLSPIPKVSEEIRKNVSELRKNLSKEEFYKLVLSKDSKIQGKISTNDLHRLSRALEVITATGKSIFVWQESRQLPLFDNFKIYTILPKREDVYRKINSRFVTMIESGAVDEVKKLLNMNLAPHLPAMRAHGVPEIIKYLKGKITLSEAIQIAQTNTRHYAKRQYTWFKNQFPNSEVIDCANKLIEFEIF</sequence>
<organism>
    <name type="scientific">Wolbachia sp. subsp. Brugia malayi (strain TRS)</name>
    <dbReference type="NCBI Taxonomy" id="292805"/>
    <lineage>
        <taxon>Bacteria</taxon>
        <taxon>Pseudomonadati</taxon>
        <taxon>Pseudomonadota</taxon>
        <taxon>Alphaproteobacteria</taxon>
        <taxon>Rickettsiales</taxon>
        <taxon>Anaplasmataceae</taxon>
        <taxon>Wolbachieae</taxon>
        <taxon>Wolbachia</taxon>
    </lineage>
</organism>
<name>MIAA_WOLTR</name>
<comment type="function">
    <text evidence="1">Catalyzes the transfer of a dimethylallyl group onto the adenine at position 37 in tRNAs that read codons beginning with uridine, leading to the formation of N6-(dimethylallyl)adenosine (i(6)A).</text>
</comment>
<comment type="catalytic activity">
    <reaction evidence="1">
        <text>adenosine(37) in tRNA + dimethylallyl diphosphate = N(6)-dimethylallyladenosine(37) in tRNA + diphosphate</text>
        <dbReference type="Rhea" id="RHEA:26482"/>
        <dbReference type="Rhea" id="RHEA-COMP:10162"/>
        <dbReference type="Rhea" id="RHEA-COMP:10375"/>
        <dbReference type="ChEBI" id="CHEBI:33019"/>
        <dbReference type="ChEBI" id="CHEBI:57623"/>
        <dbReference type="ChEBI" id="CHEBI:74411"/>
        <dbReference type="ChEBI" id="CHEBI:74415"/>
        <dbReference type="EC" id="2.5.1.75"/>
    </reaction>
</comment>
<comment type="cofactor">
    <cofactor evidence="1">
        <name>Mg(2+)</name>
        <dbReference type="ChEBI" id="CHEBI:18420"/>
    </cofactor>
</comment>
<comment type="subunit">
    <text evidence="1">Monomer.</text>
</comment>
<comment type="similarity">
    <text evidence="1">Belongs to the IPP transferase family.</text>
</comment>
<evidence type="ECO:0000255" key="1">
    <source>
        <dbReference type="HAMAP-Rule" id="MF_00185"/>
    </source>
</evidence>
<protein>
    <recommendedName>
        <fullName evidence="1">tRNA dimethylallyltransferase</fullName>
        <ecNumber evidence="1">2.5.1.75</ecNumber>
    </recommendedName>
    <alternativeName>
        <fullName evidence="1">Dimethylallyl diphosphate:tRNA dimethylallyltransferase</fullName>
        <shortName evidence="1">DMAPP:tRNA dimethylallyltransferase</shortName>
        <shortName evidence="1">DMATase</shortName>
    </alternativeName>
    <alternativeName>
        <fullName evidence="1">Isopentenyl-diphosphate:tRNA isopentenyltransferase</fullName>
        <shortName evidence="1">IPP transferase</shortName>
        <shortName evidence="1">IPPT</shortName>
        <shortName evidence="1">IPTase</shortName>
    </alternativeName>
</protein>